<proteinExistence type="inferred from homology"/>
<organism>
    <name type="scientific">Vibrio cholerae serotype O1 (strain ATCC 39315 / El Tor Inaba N16961)</name>
    <dbReference type="NCBI Taxonomy" id="243277"/>
    <lineage>
        <taxon>Bacteria</taxon>
        <taxon>Pseudomonadati</taxon>
        <taxon>Pseudomonadota</taxon>
        <taxon>Gammaproteobacteria</taxon>
        <taxon>Vibrionales</taxon>
        <taxon>Vibrionaceae</taxon>
        <taxon>Vibrio</taxon>
    </lineage>
</organism>
<feature type="chain" id="PRO_0000091260" description="Elongation factor G 2">
    <location>
        <begin position="1"/>
        <end position="695"/>
    </location>
</feature>
<feature type="domain" description="tr-type G">
    <location>
        <begin position="5"/>
        <end position="280"/>
    </location>
</feature>
<feature type="binding site" evidence="1">
    <location>
        <begin position="14"/>
        <end position="21"/>
    </location>
    <ligand>
        <name>GTP</name>
        <dbReference type="ChEBI" id="CHEBI:37565"/>
    </ligand>
</feature>
<feature type="binding site" evidence="1">
    <location>
        <begin position="78"/>
        <end position="82"/>
    </location>
    <ligand>
        <name>GTP</name>
        <dbReference type="ChEBI" id="CHEBI:37565"/>
    </ligand>
</feature>
<feature type="binding site" evidence="1">
    <location>
        <begin position="132"/>
        <end position="135"/>
    </location>
    <ligand>
        <name>GTP</name>
        <dbReference type="ChEBI" id="CHEBI:37565"/>
    </ligand>
</feature>
<name>EFG2_VIBCH</name>
<accession>Q9KPM5</accession>
<protein>
    <recommendedName>
        <fullName evidence="1">Elongation factor G 2</fullName>
        <shortName evidence="1">EF-G 2</shortName>
    </recommendedName>
</protein>
<evidence type="ECO:0000255" key="1">
    <source>
        <dbReference type="HAMAP-Rule" id="MF_00054"/>
    </source>
</evidence>
<comment type="function">
    <text evidence="1">Catalyzes the GTP-dependent ribosomal translocation step during translation elongation. During this step, the ribosome changes from the pre-translocational (PRE) to the post-translocational (POST) state as the newly formed A-site-bound peptidyl-tRNA and P-site-bound deacylated tRNA move to the P and E sites, respectively. Catalyzes the coordinated movement of the two tRNA molecules, the mRNA and conformational changes in the ribosome.</text>
</comment>
<comment type="subcellular location">
    <subcellularLocation>
        <location evidence="1">Cytoplasm</location>
    </subcellularLocation>
</comment>
<comment type="similarity">
    <text evidence="1">Belongs to the TRAFAC class translation factor GTPase superfamily. Classic translation factor GTPase family. EF-G/EF-2 subfamily.</text>
</comment>
<keyword id="KW-0963">Cytoplasm</keyword>
<keyword id="KW-0251">Elongation factor</keyword>
<keyword id="KW-0342">GTP-binding</keyword>
<keyword id="KW-0547">Nucleotide-binding</keyword>
<keyword id="KW-0648">Protein biosynthesis</keyword>
<keyword id="KW-1185">Reference proteome</keyword>
<reference key="1">
    <citation type="journal article" date="2000" name="Nature">
        <title>DNA sequence of both chromosomes of the cholera pathogen Vibrio cholerae.</title>
        <authorList>
            <person name="Heidelberg J.F."/>
            <person name="Eisen J.A."/>
            <person name="Nelson W.C."/>
            <person name="Clayton R.A."/>
            <person name="Gwinn M.L."/>
            <person name="Dodson R.J."/>
            <person name="Haft D.H."/>
            <person name="Hickey E.K."/>
            <person name="Peterson J.D."/>
            <person name="Umayam L.A."/>
            <person name="Gill S.R."/>
            <person name="Nelson K.E."/>
            <person name="Read T.D."/>
            <person name="Tettelin H."/>
            <person name="Richardson D.L."/>
            <person name="Ermolaeva M.D."/>
            <person name="Vamathevan J.J."/>
            <person name="Bass S."/>
            <person name="Qin H."/>
            <person name="Dragoi I."/>
            <person name="Sellers P."/>
            <person name="McDonald L.A."/>
            <person name="Utterback T.R."/>
            <person name="Fleischmann R.D."/>
            <person name="Nierman W.C."/>
            <person name="White O."/>
            <person name="Salzberg S.L."/>
            <person name="Smith H.O."/>
            <person name="Colwell R.R."/>
            <person name="Mekalanos J.J."/>
            <person name="Venter J.C."/>
            <person name="Fraser C.M."/>
        </authorList>
    </citation>
    <scope>NUCLEOTIDE SEQUENCE [LARGE SCALE GENOMIC DNA]</scope>
    <source>
        <strain>ATCC 39315 / El Tor Inaba N16961</strain>
    </source>
</reference>
<sequence length="695" mass="76482">MADLSLYRNIGIFAHVDAGKTTTTERILKLTGKIHRLGEVHDGASTMDFMEQEAERGITIQSAATTCFWKGHRFNVIDTPGHVDFTVEVYRSLKVLDGGIGVFCGSGGVEPQSETNWRYANESEVSRLIFVNKLDRMGADFFRVVEQVKKVLGANPLVMTLPIGREDEFVGVVDVLTRQAYVWDDSGLPENFEVKEVPADMVDQVEEYREMMIETAVEQDDELMMAYMEGEEPTVEQIKACIRKGTRDLAFFPTFCGSAFKNKGMQLVLDAVVDYLPSPTEVEPQPLTDPATGEPTGEVATVSVDAPLKALAFKIMDDRFGALTFVRIYSGKIKKGDTILNSATGKTERIGRMVEMHANDRNEVESAQASDIIAIVGMKNVQTGHTLCDPKHECTLEPMIFPTPVISIAVKPKDKNGSEKMGIAIGKMVAEDPSFQVETDEDSGETILKGMGELHLDIKVDILKRTYGVELEVGAPQVAYRETITKAVEDSYTHKKQSGGSGQFGKIDYRIRPGEQNSGFTFKSTVVGGNVPKEFWPAVEKGFKSMMDTGTLAGFPVLDVEVELFDGGFHAVDSSAIAFEIAAKGAFRQSIPKAAPQLLEPIMKVDVFTPEDHVGDVIGDLNRRRGMIKDQEMGLTGVRVKADVPLSEMFGYIGSLRTMTSGRGQFSMEFSHYAPCPNNVAEQVIAEVKERNAKK</sequence>
<dbReference type="EMBL" id="AE003852">
    <property type="protein sequence ID" value="AAF95485.1"/>
    <property type="molecule type" value="Genomic_DNA"/>
</dbReference>
<dbReference type="PIR" id="G82088">
    <property type="entry name" value="G82088"/>
</dbReference>
<dbReference type="RefSeq" id="NP_231972.1">
    <property type="nucleotide sequence ID" value="NC_002505.1"/>
</dbReference>
<dbReference type="RefSeq" id="WP_000774533.1">
    <property type="nucleotide sequence ID" value="NC_002505.1"/>
</dbReference>
<dbReference type="SMR" id="Q9KPM5"/>
<dbReference type="STRING" id="243277.VC_2342"/>
<dbReference type="DNASU" id="2613138"/>
<dbReference type="EnsemblBacteria" id="AAF95485">
    <property type="protein sequence ID" value="AAF95485"/>
    <property type="gene ID" value="VC_2342"/>
</dbReference>
<dbReference type="KEGG" id="vch:VC_2342"/>
<dbReference type="PATRIC" id="fig|243277.26.peg.2229"/>
<dbReference type="eggNOG" id="COG0480">
    <property type="taxonomic scope" value="Bacteria"/>
</dbReference>
<dbReference type="HOGENOM" id="CLU_002794_4_1_6"/>
<dbReference type="Proteomes" id="UP000000584">
    <property type="component" value="Chromosome 1"/>
</dbReference>
<dbReference type="GO" id="GO:0005737">
    <property type="term" value="C:cytoplasm"/>
    <property type="evidence" value="ECO:0007669"/>
    <property type="project" value="UniProtKB-SubCell"/>
</dbReference>
<dbReference type="GO" id="GO:0005525">
    <property type="term" value="F:GTP binding"/>
    <property type="evidence" value="ECO:0007669"/>
    <property type="project" value="UniProtKB-UniRule"/>
</dbReference>
<dbReference type="GO" id="GO:0003924">
    <property type="term" value="F:GTPase activity"/>
    <property type="evidence" value="ECO:0007669"/>
    <property type="project" value="InterPro"/>
</dbReference>
<dbReference type="GO" id="GO:0097216">
    <property type="term" value="F:guanosine tetraphosphate binding"/>
    <property type="evidence" value="ECO:0007669"/>
    <property type="project" value="UniProtKB-ARBA"/>
</dbReference>
<dbReference type="GO" id="GO:0003746">
    <property type="term" value="F:translation elongation factor activity"/>
    <property type="evidence" value="ECO:0007669"/>
    <property type="project" value="UniProtKB-UniRule"/>
</dbReference>
<dbReference type="GO" id="GO:0032790">
    <property type="term" value="P:ribosome disassembly"/>
    <property type="evidence" value="ECO:0000318"/>
    <property type="project" value="GO_Central"/>
</dbReference>
<dbReference type="CDD" id="cd01886">
    <property type="entry name" value="EF-G"/>
    <property type="match status" value="1"/>
</dbReference>
<dbReference type="CDD" id="cd16262">
    <property type="entry name" value="EFG_III"/>
    <property type="match status" value="1"/>
</dbReference>
<dbReference type="CDD" id="cd01434">
    <property type="entry name" value="EFG_mtEFG1_IV"/>
    <property type="match status" value="1"/>
</dbReference>
<dbReference type="CDD" id="cd03713">
    <property type="entry name" value="EFG_mtEFG_C"/>
    <property type="match status" value="1"/>
</dbReference>
<dbReference type="CDD" id="cd04088">
    <property type="entry name" value="EFG_mtEFG_II"/>
    <property type="match status" value="1"/>
</dbReference>
<dbReference type="FunFam" id="2.40.30.10:FF:000006">
    <property type="entry name" value="Elongation factor G"/>
    <property type="match status" value="1"/>
</dbReference>
<dbReference type="FunFam" id="3.30.230.10:FF:000003">
    <property type="entry name" value="Elongation factor G"/>
    <property type="match status" value="1"/>
</dbReference>
<dbReference type="FunFam" id="3.30.70.240:FF:000001">
    <property type="entry name" value="Elongation factor G"/>
    <property type="match status" value="1"/>
</dbReference>
<dbReference type="FunFam" id="3.30.70.870:FF:000006">
    <property type="entry name" value="Elongation factor G"/>
    <property type="match status" value="1"/>
</dbReference>
<dbReference type="FunFam" id="3.40.50.300:FF:000029">
    <property type="entry name" value="Elongation factor G"/>
    <property type="match status" value="1"/>
</dbReference>
<dbReference type="Gene3D" id="3.30.230.10">
    <property type="match status" value="1"/>
</dbReference>
<dbReference type="Gene3D" id="3.30.70.240">
    <property type="match status" value="1"/>
</dbReference>
<dbReference type="Gene3D" id="3.30.70.870">
    <property type="entry name" value="Elongation Factor G (Translational Gtpase), domain 3"/>
    <property type="match status" value="1"/>
</dbReference>
<dbReference type="Gene3D" id="3.40.50.300">
    <property type="entry name" value="P-loop containing nucleotide triphosphate hydrolases"/>
    <property type="match status" value="1"/>
</dbReference>
<dbReference type="Gene3D" id="2.40.30.10">
    <property type="entry name" value="Translation factors"/>
    <property type="match status" value="1"/>
</dbReference>
<dbReference type="HAMAP" id="MF_00054_B">
    <property type="entry name" value="EF_G_EF_2_B"/>
    <property type="match status" value="1"/>
</dbReference>
<dbReference type="InterPro" id="IPR041095">
    <property type="entry name" value="EFG_II"/>
</dbReference>
<dbReference type="InterPro" id="IPR009022">
    <property type="entry name" value="EFG_III"/>
</dbReference>
<dbReference type="InterPro" id="IPR035647">
    <property type="entry name" value="EFG_III/V"/>
</dbReference>
<dbReference type="InterPro" id="IPR047872">
    <property type="entry name" value="EFG_IV"/>
</dbReference>
<dbReference type="InterPro" id="IPR035649">
    <property type="entry name" value="EFG_V"/>
</dbReference>
<dbReference type="InterPro" id="IPR000640">
    <property type="entry name" value="EFG_V-like"/>
</dbReference>
<dbReference type="InterPro" id="IPR004161">
    <property type="entry name" value="EFTu-like_2"/>
</dbReference>
<dbReference type="InterPro" id="IPR031157">
    <property type="entry name" value="G_TR_CS"/>
</dbReference>
<dbReference type="InterPro" id="IPR027417">
    <property type="entry name" value="P-loop_NTPase"/>
</dbReference>
<dbReference type="InterPro" id="IPR020568">
    <property type="entry name" value="Ribosomal_Su5_D2-typ_SF"/>
</dbReference>
<dbReference type="InterPro" id="IPR014721">
    <property type="entry name" value="Ribsml_uS5_D2-typ_fold_subgr"/>
</dbReference>
<dbReference type="InterPro" id="IPR005225">
    <property type="entry name" value="Small_GTP-bd"/>
</dbReference>
<dbReference type="InterPro" id="IPR000795">
    <property type="entry name" value="T_Tr_GTP-bd_dom"/>
</dbReference>
<dbReference type="InterPro" id="IPR009000">
    <property type="entry name" value="Transl_B-barrel_sf"/>
</dbReference>
<dbReference type="InterPro" id="IPR004540">
    <property type="entry name" value="Transl_elong_EFG/EF2"/>
</dbReference>
<dbReference type="InterPro" id="IPR005517">
    <property type="entry name" value="Transl_elong_EFG/EF2_IV"/>
</dbReference>
<dbReference type="NCBIfam" id="TIGR00484">
    <property type="entry name" value="EF-G"/>
    <property type="match status" value="1"/>
</dbReference>
<dbReference type="NCBIfam" id="NF009381">
    <property type="entry name" value="PRK12740.1-5"/>
    <property type="match status" value="1"/>
</dbReference>
<dbReference type="NCBIfam" id="TIGR00231">
    <property type="entry name" value="small_GTP"/>
    <property type="match status" value="1"/>
</dbReference>
<dbReference type="PANTHER" id="PTHR43261:SF5">
    <property type="entry name" value="ELONGATION FACTOR G 1"/>
    <property type="match status" value="1"/>
</dbReference>
<dbReference type="PANTHER" id="PTHR43261">
    <property type="entry name" value="TRANSLATION ELONGATION FACTOR G-RELATED"/>
    <property type="match status" value="1"/>
</dbReference>
<dbReference type="Pfam" id="PF00679">
    <property type="entry name" value="EFG_C"/>
    <property type="match status" value="1"/>
</dbReference>
<dbReference type="Pfam" id="PF14492">
    <property type="entry name" value="EFG_III"/>
    <property type="match status" value="1"/>
</dbReference>
<dbReference type="Pfam" id="PF03764">
    <property type="entry name" value="EFG_IV"/>
    <property type="match status" value="1"/>
</dbReference>
<dbReference type="Pfam" id="PF00009">
    <property type="entry name" value="GTP_EFTU"/>
    <property type="match status" value="1"/>
</dbReference>
<dbReference type="Pfam" id="PF03144">
    <property type="entry name" value="GTP_EFTU_D2"/>
    <property type="match status" value="1"/>
</dbReference>
<dbReference type="PRINTS" id="PR00315">
    <property type="entry name" value="ELONGATNFCT"/>
</dbReference>
<dbReference type="SMART" id="SM00838">
    <property type="entry name" value="EFG_C"/>
    <property type="match status" value="1"/>
</dbReference>
<dbReference type="SMART" id="SM00889">
    <property type="entry name" value="EFG_IV"/>
    <property type="match status" value="1"/>
</dbReference>
<dbReference type="SUPFAM" id="SSF54980">
    <property type="entry name" value="EF-G C-terminal domain-like"/>
    <property type="match status" value="2"/>
</dbReference>
<dbReference type="SUPFAM" id="SSF52540">
    <property type="entry name" value="P-loop containing nucleoside triphosphate hydrolases"/>
    <property type="match status" value="1"/>
</dbReference>
<dbReference type="SUPFAM" id="SSF54211">
    <property type="entry name" value="Ribosomal protein S5 domain 2-like"/>
    <property type="match status" value="1"/>
</dbReference>
<dbReference type="SUPFAM" id="SSF50447">
    <property type="entry name" value="Translation proteins"/>
    <property type="match status" value="1"/>
</dbReference>
<dbReference type="PROSITE" id="PS00301">
    <property type="entry name" value="G_TR_1"/>
    <property type="match status" value="1"/>
</dbReference>
<dbReference type="PROSITE" id="PS51722">
    <property type="entry name" value="G_TR_2"/>
    <property type="match status" value="1"/>
</dbReference>
<gene>
    <name evidence="1" type="primary">fusA2</name>
    <name type="ordered locus">VC_2342</name>
</gene>